<name>TRPB_BLOFL</name>
<comment type="function">
    <text evidence="1">The beta subunit is responsible for the synthesis of L-tryptophan from indole and L-serine.</text>
</comment>
<comment type="catalytic activity">
    <reaction evidence="1">
        <text>(1S,2R)-1-C-(indol-3-yl)glycerol 3-phosphate + L-serine = D-glyceraldehyde 3-phosphate + L-tryptophan + H2O</text>
        <dbReference type="Rhea" id="RHEA:10532"/>
        <dbReference type="ChEBI" id="CHEBI:15377"/>
        <dbReference type="ChEBI" id="CHEBI:33384"/>
        <dbReference type="ChEBI" id="CHEBI:57912"/>
        <dbReference type="ChEBI" id="CHEBI:58866"/>
        <dbReference type="ChEBI" id="CHEBI:59776"/>
        <dbReference type="EC" id="4.2.1.20"/>
    </reaction>
</comment>
<comment type="cofactor">
    <cofactor evidence="1">
        <name>pyridoxal 5'-phosphate</name>
        <dbReference type="ChEBI" id="CHEBI:597326"/>
    </cofactor>
</comment>
<comment type="pathway">
    <text evidence="1">Amino-acid biosynthesis; L-tryptophan biosynthesis; L-tryptophan from chorismate: step 5/5.</text>
</comment>
<comment type="subunit">
    <text evidence="1">Tetramer of two alpha and two beta chains.</text>
</comment>
<comment type="similarity">
    <text evidence="1">Belongs to the TrpB family.</text>
</comment>
<organism>
    <name type="scientific">Blochmanniella floridana</name>
    <dbReference type="NCBI Taxonomy" id="203907"/>
    <lineage>
        <taxon>Bacteria</taxon>
        <taxon>Pseudomonadati</taxon>
        <taxon>Pseudomonadota</taxon>
        <taxon>Gammaproteobacteria</taxon>
        <taxon>Enterobacterales</taxon>
        <taxon>Enterobacteriaceae</taxon>
        <taxon>ant endosymbionts</taxon>
        <taxon>Candidatus Blochmanniella</taxon>
    </lineage>
</organism>
<reference key="1">
    <citation type="journal article" date="2003" name="Proc. Natl. Acad. Sci. U.S.A.">
        <title>The genome sequence of Blochmannia floridanus: comparative analysis of reduced genomes.</title>
        <authorList>
            <person name="Gil R."/>
            <person name="Silva F.J."/>
            <person name="Zientz E."/>
            <person name="Delmotte F."/>
            <person name="Gonzalez-Candelas F."/>
            <person name="Latorre A."/>
            <person name="Rausell C."/>
            <person name="Kamerbeek J."/>
            <person name="Gadau J."/>
            <person name="Hoelldobler B."/>
            <person name="van Ham R.C.H.J."/>
            <person name="Gross R."/>
            <person name="Moya A."/>
        </authorList>
    </citation>
    <scope>NUCLEOTIDE SEQUENCE [LARGE SCALE GENOMIC DNA]</scope>
</reference>
<keyword id="KW-0028">Amino-acid biosynthesis</keyword>
<keyword id="KW-0057">Aromatic amino acid biosynthesis</keyword>
<keyword id="KW-0456">Lyase</keyword>
<keyword id="KW-0663">Pyridoxal phosphate</keyword>
<keyword id="KW-1185">Reference proteome</keyword>
<keyword id="KW-0822">Tryptophan biosynthesis</keyword>
<feature type="chain" id="PRO_0000098936" description="Tryptophan synthase beta chain">
    <location>
        <begin position="1"/>
        <end position="398"/>
    </location>
</feature>
<feature type="modified residue" description="N6-(pyridoxal phosphate)lysine" evidence="1">
    <location>
        <position position="87"/>
    </location>
</feature>
<protein>
    <recommendedName>
        <fullName evidence="1">Tryptophan synthase beta chain</fullName>
        <ecNumber evidence="1">4.2.1.20</ecNumber>
    </recommendedName>
</protein>
<proteinExistence type="inferred from homology"/>
<dbReference type="EC" id="4.2.1.20" evidence="1"/>
<dbReference type="EMBL" id="BX248583">
    <property type="protein sequence ID" value="CAD83492.1"/>
    <property type="molecule type" value="Genomic_DNA"/>
</dbReference>
<dbReference type="SMR" id="Q7VR00"/>
<dbReference type="STRING" id="203907.Bfl430"/>
<dbReference type="KEGG" id="bfl:Bfl430"/>
<dbReference type="eggNOG" id="COG0133">
    <property type="taxonomic scope" value="Bacteria"/>
</dbReference>
<dbReference type="HOGENOM" id="CLU_016734_3_1_6"/>
<dbReference type="OrthoDB" id="9766131at2"/>
<dbReference type="UniPathway" id="UPA00035">
    <property type="reaction ID" value="UER00044"/>
</dbReference>
<dbReference type="Proteomes" id="UP000002192">
    <property type="component" value="Chromosome"/>
</dbReference>
<dbReference type="GO" id="GO:0005737">
    <property type="term" value="C:cytoplasm"/>
    <property type="evidence" value="ECO:0007669"/>
    <property type="project" value="TreeGrafter"/>
</dbReference>
<dbReference type="GO" id="GO:0004834">
    <property type="term" value="F:tryptophan synthase activity"/>
    <property type="evidence" value="ECO:0007669"/>
    <property type="project" value="UniProtKB-UniRule"/>
</dbReference>
<dbReference type="CDD" id="cd06446">
    <property type="entry name" value="Trp-synth_B"/>
    <property type="match status" value="1"/>
</dbReference>
<dbReference type="FunFam" id="3.40.50.1100:FF:000001">
    <property type="entry name" value="Tryptophan synthase beta chain"/>
    <property type="match status" value="1"/>
</dbReference>
<dbReference type="FunFam" id="3.40.50.1100:FF:000004">
    <property type="entry name" value="Tryptophan synthase beta chain"/>
    <property type="match status" value="1"/>
</dbReference>
<dbReference type="Gene3D" id="3.40.50.1100">
    <property type="match status" value="2"/>
</dbReference>
<dbReference type="HAMAP" id="MF_00133">
    <property type="entry name" value="Trp_synth_beta"/>
    <property type="match status" value="1"/>
</dbReference>
<dbReference type="InterPro" id="IPR006653">
    <property type="entry name" value="Trp_synth_b_CS"/>
</dbReference>
<dbReference type="InterPro" id="IPR006654">
    <property type="entry name" value="Trp_synth_beta"/>
</dbReference>
<dbReference type="InterPro" id="IPR023026">
    <property type="entry name" value="Trp_synth_beta/beta-like"/>
</dbReference>
<dbReference type="InterPro" id="IPR001926">
    <property type="entry name" value="TrpB-like_PALP"/>
</dbReference>
<dbReference type="InterPro" id="IPR036052">
    <property type="entry name" value="TrpB-like_PALP_sf"/>
</dbReference>
<dbReference type="NCBIfam" id="TIGR00263">
    <property type="entry name" value="trpB"/>
    <property type="match status" value="1"/>
</dbReference>
<dbReference type="PANTHER" id="PTHR48077:SF3">
    <property type="entry name" value="TRYPTOPHAN SYNTHASE"/>
    <property type="match status" value="1"/>
</dbReference>
<dbReference type="PANTHER" id="PTHR48077">
    <property type="entry name" value="TRYPTOPHAN SYNTHASE-RELATED"/>
    <property type="match status" value="1"/>
</dbReference>
<dbReference type="Pfam" id="PF00291">
    <property type="entry name" value="PALP"/>
    <property type="match status" value="1"/>
</dbReference>
<dbReference type="PIRSF" id="PIRSF001413">
    <property type="entry name" value="Trp_syn_beta"/>
    <property type="match status" value="1"/>
</dbReference>
<dbReference type="SUPFAM" id="SSF53686">
    <property type="entry name" value="Tryptophan synthase beta subunit-like PLP-dependent enzymes"/>
    <property type="match status" value="1"/>
</dbReference>
<dbReference type="PROSITE" id="PS00168">
    <property type="entry name" value="TRP_SYNTHASE_BETA"/>
    <property type="match status" value="1"/>
</dbReference>
<sequence>MTQQLHSYFGEFGGMYVPQILIPALIQLEKEFIEAMKDISFQTTFKNLLHHYAGRPTPLTLCQNLTSGTCSKLYLKREDLLHGGSHKTNQVLGQALLAKRMHKKEIIAETGAGQHGVAVSIASSLLKLKCRIYMGYKDMKRQELNVLRMKLMGTQVIPVHHGSATLKDACNEAIREWSSTYKHTHYMIGTVAGPHPFPTIVKEFQRIIGSETYNQIQTHEKKLPDAVIACIGGGSNAIGIFSGFIDIPSVQLLGVEAGGLGLHTEYHGSSLQCGETGIYFGMKSPILQSQEGQIKNSYSIAAGLDFPSVGPEHAYLKKINRVKYVSINDEEAINAFQELSLYEGIIPALESAHALAHALKIIRKTPKKKQILIVNLSGRGDKDIITVNNALLNKEICK</sequence>
<accession>Q7VR00</accession>
<gene>
    <name evidence="1" type="primary">trpB</name>
    <name type="ordered locus">Bfl430</name>
</gene>
<evidence type="ECO:0000255" key="1">
    <source>
        <dbReference type="HAMAP-Rule" id="MF_00133"/>
    </source>
</evidence>